<reference key="1">
    <citation type="journal article" date="2007" name="J. Bacteriol.">
        <title>The complete genome sequence of Campylobacter jejuni strain 81116 (NCTC11828).</title>
        <authorList>
            <person name="Pearson B.M."/>
            <person name="Gaskin D.J.H."/>
            <person name="Segers R.P.A.M."/>
            <person name="Wells J.M."/>
            <person name="Nuijten P.J.M."/>
            <person name="van Vliet A.H.M."/>
        </authorList>
    </citation>
    <scope>NUCLEOTIDE SEQUENCE [LARGE SCALE GENOMIC DNA]</scope>
    <source>
        <strain>81116 / NCTC 11828</strain>
    </source>
</reference>
<comment type="function">
    <text evidence="1">Catalyzes the reversible transfer of the terminal phosphate of ATP to form a long-chain polyphosphate (polyP).</text>
</comment>
<comment type="catalytic activity">
    <reaction evidence="1">
        <text>[phosphate](n) + ATP = [phosphate](n+1) + ADP</text>
        <dbReference type="Rhea" id="RHEA:19573"/>
        <dbReference type="Rhea" id="RHEA-COMP:9859"/>
        <dbReference type="Rhea" id="RHEA-COMP:14280"/>
        <dbReference type="ChEBI" id="CHEBI:16838"/>
        <dbReference type="ChEBI" id="CHEBI:30616"/>
        <dbReference type="ChEBI" id="CHEBI:456216"/>
        <dbReference type="EC" id="2.7.4.1"/>
    </reaction>
</comment>
<comment type="cofactor">
    <cofactor evidence="1">
        <name>Mg(2+)</name>
        <dbReference type="ChEBI" id="CHEBI:18420"/>
    </cofactor>
</comment>
<comment type="PTM">
    <text evidence="1">An intermediate of this reaction is the autophosphorylated ppk in which a phosphate is covalently linked to a histidine residue through a N-P bond.</text>
</comment>
<comment type="similarity">
    <text evidence="1">Belongs to the polyphosphate kinase 1 (PPK1) family.</text>
</comment>
<dbReference type="EC" id="2.7.4.1" evidence="1"/>
<dbReference type="EMBL" id="CP000814">
    <property type="protein sequence ID" value="ABV52876.1"/>
    <property type="molecule type" value="Genomic_DNA"/>
</dbReference>
<dbReference type="SMR" id="A8FN39"/>
<dbReference type="KEGG" id="cju:C8J_1277"/>
<dbReference type="HOGENOM" id="CLU_009678_1_1_7"/>
<dbReference type="GO" id="GO:0009358">
    <property type="term" value="C:polyphosphate kinase complex"/>
    <property type="evidence" value="ECO:0007669"/>
    <property type="project" value="InterPro"/>
</dbReference>
<dbReference type="GO" id="GO:0005524">
    <property type="term" value="F:ATP binding"/>
    <property type="evidence" value="ECO:0007669"/>
    <property type="project" value="UniProtKB-KW"/>
</dbReference>
<dbReference type="GO" id="GO:0046872">
    <property type="term" value="F:metal ion binding"/>
    <property type="evidence" value="ECO:0007669"/>
    <property type="project" value="UniProtKB-KW"/>
</dbReference>
<dbReference type="GO" id="GO:0008976">
    <property type="term" value="F:polyphosphate kinase activity"/>
    <property type="evidence" value="ECO:0007669"/>
    <property type="project" value="UniProtKB-UniRule"/>
</dbReference>
<dbReference type="GO" id="GO:0006799">
    <property type="term" value="P:polyphosphate biosynthetic process"/>
    <property type="evidence" value="ECO:0007669"/>
    <property type="project" value="UniProtKB-UniRule"/>
</dbReference>
<dbReference type="CDD" id="cd09165">
    <property type="entry name" value="PLDc_PaPPK1_C1_like"/>
    <property type="match status" value="1"/>
</dbReference>
<dbReference type="CDD" id="cd09168">
    <property type="entry name" value="PLDc_PaPPK1_C2_like"/>
    <property type="match status" value="1"/>
</dbReference>
<dbReference type="Gene3D" id="3.30.870.10">
    <property type="entry name" value="Endonuclease Chain A"/>
    <property type="match status" value="2"/>
</dbReference>
<dbReference type="Gene3D" id="3.30.1840.10">
    <property type="entry name" value="Polyphosphate kinase middle domain"/>
    <property type="match status" value="1"/>
</dbReference>
<dbReference type="Gene3D" id="1.20.58.310">
    <property type="entry name" value="Polyphosphate kinase N-terminal domain"/>
    <property type="match status" value="1"/>
</dbReference>
<dbReference type="HAMAP" id="MF_00347">
    <property type="entry name" value="Polyphosphate_kinase"/>
    <property type="match status" value="1"/>
</dbReference>
<dbReference type="InterPro" id="IPR003414">
    <property type="entry name" value="PP_kinase"/>
</dbReference>
<dbReference type="InterPro" id="IPR041108">
    <property type="entry name" value="PP_kinase_C_1"/>
</dbReference>
<dbReference type="InterPro" id="IPR024953">
    <property type="entry name" value="PP_kinase_middle"/>
</dbReference>
<dbReference type="InterPro" id="IPR036830">
    <property type="entry name" value="PP_kinase_middle_dom_sf"/>
</dbReference>
<dbReference type="InterPro" id="IPR025200">
    <property type="entry name" value="PPK_C_dom2"/>
</dbReference>
<dbReference type="InterPro" id="IPR025198">
    <property type="entry name" value="PPK_N_dom"/>
</dbReference>
<dbReference type="InterPro" id="IPR036832">
    <property type="entry name" value="PPK_N_dom_sf"/>
</dbReference>
<dbReference type="NCBIfam" id="TIGR03705">
    <property type="entry name" value="poly_P_kin"/>
    <property type="match status" value="1"/>
</dbReference>
<dbReference type="NCBIfam" id="NF003921">
    <property type="entry name" value="PRK05443.2-2"/>
    <property type="match status" value="1"/>
</dbReference>
<dbReference type="NCBIfam" id="NF003924">
    <property type="entry name" value="PRK05443.3-2"/>
    <property type="match status" value="1"/>
</dbReference>
<dbReference type="PANTHER" id="PTHR30218">
    <property type="entry name" value="POLYPHOSPHATE KINASE"/>
    <property type="match status" value="1"/>
</dbReference>
<dbReference type="PANTHER" id="PTHR30218:SF0">
    <property type="entry name" value="POLYPHOSPHATE KINASE"/>
    <property type="match status" value="1"/>
</dbReference>
<dbReference type="Pfam" id="PF02503">
    <property type="entry name" value="PP_kinase"/>
    <property type="match status" value="1"/>
</dbReference>
<dbReference type="Pfam" id="PF13090">
    <property type="entry name" value="PP_kinase_C"/>
    <property type="match status" value="1"/>
</dbReference>
<dbReference type="Pfam" id="PF17941">
    <property type="entry name" value="PP_kinase_C_1"/>
    <property type="match status" value="1"/>
</dbReference>
<dbReference type="Pfam" id="PF13089">
    <property type="entry name" value="PP_kinase_N"/>
    <property type="match status" value="1"/>
</dbReference>
<dbReference type="PIRSF" id="PIRSF015589">
    <property type="entry name" value="PP_kinase"/>
    <property type="match status" value="1"/>
</dbReference>
<dbReference type="SUPFAM" id="SSF56024">
    <property type="entry name" value="Phospholipase D/nuclease"/>
    <property type="match status" value="2"/>
</dbReference>
<dbReference type="SUPFAM" id="SSF143724">
    <property type="entry name" value="PHP14-like"/>
    <property type="match status" value="1"/>
</dbReference>
<dbReference type="SUPFAM" id="SSF140356">
    <property type="entry name" value="PPK N-terminal domain-like"/>
    <property type="match status" value="1"/>
</dbReference>
<protein>
    <recommendedName>
        <fullName evidence="1">Polyphosphate kinase</fullName>
        <ecNumber evidence="1">2.7.4.1</ecNumber>
    </recommendedName>
    <alternativeName>
        <fullName evidence="1">ATP-polyphosphate phosphotransferase</fullName>
    </alternativeName>
    <alternativeName>
        <fullName evidence="1">Polyphosphoric acid kinase</fullName>
    </alternativeName>
</protein>
<accession>A8FN39</accession>
<evidence type="ECO:0000255" key="1">
    <source>
        <dbReference type="HAMAP-Rule" id="MF_00347"/>
    </source>
</evidence>
<feature type="chain" id="PRO_1000079359" description="Polyphosphate kinase">
    <location>
        <begin position="1"/>
        <end position="694"/>
    </location>
</feature>
<feature type="active site" description="Phosphohistidine intermediate" evidence="1">
    <location>
        <position position="427"/>
    </location>
</feature>
<feature type="binding site" evidence="1">
    <location>
        <position position="45"/>
    </location>
    <ligand>
        <name>ATP</name>
        <dbReference type="ChEBI" id="CHEBI:30616"/>
    </ligand>
</feature>
<feature type="binding site" evidence="1">
    <location>
        <position position="367"/>
    </location>
    <ligand>
        <name>Mg(2+)</name>
        <dbReference type="ChEBI" id="CHEBI:18420"/>
    </ligand>
</feature>
<feature type="binding site" evidence="1">
    <location>
        <position position="397"/>
    </location>
    <ligand>
        <name>Mg(2+)</name>
        <dbReference type="ChEBI" id="CHEBI:18420"/>
    </ligand>
</feature>
<feature type="binding site" evidence="1">
    <location>
        <position position="460"/>
    </location>
    <ligand>
        <name>ATP</name>
        <dbReference type="ChEBI" id="CHEBI:30616"/>
    </ligand>
</feature>
<feature type="binding site" evidence="1">
    <location>
        <position position="553"/>
    </location>
    <ligand>
        <name>ATP</name>
        <dbReference type="ChEBI" id="CHEBI:30616"/>
    </ligand>
</feature>
<feature type="binding site" evidence="1">
    <location>
        <position position="580"/>
    </location>
    <ligand>
        <name>ATP</name>
        <dbReference type="ChEBI" id="CHEBI:30616"/>
    </ligand>
</feature>
<organism>
    <name type="scientific">Campylobacter jejuni subsp. jejuni serotype O:6 (strain 81116 / NCTC 11828)</name>
    <dbReference type="NCBI Taxonomy" id="407148"/>
    <lineage>
        <taxon>Bacteria</taxon>
        <taxon>Pseudomonadati</taxon>
        <taxon>Campylobacterota</taxon>
        <taxon>Epsilonproteobacteria</taxon>
        <taxon>Campylobacterales</taxon>
        <taxon>Campylobacteraceae</taxon>
        <taxon>Campylobacter</taxon>
    </lineage>
</organism>
<name>PPK1_CAMJ8</name>
<gene>
    <name evidence="1" type="primary">ppk</name>
    <name type="ordered locus">C8J_1277</name>
</gene>
<sequence length="694" mass="80460">MQTSPDMFINRELSWLRFNSRVLDQCSKNLPLLEKLKFIAIYCTNLDEFYMIRVAGLKQLFSAGVNASSSDEMTPLQQLKAIRKYLHQEKELLERYFNEITSELEKENLFIKHYENLDENLKQKCDEYFFSNIFPVIVPIAVDATHPFPHLNNLSFSLAVKICDKAHPELVKFGMIRIPRVLPRFYEVSANIYVPIESIVHQHAEEIFPGYKLLASAAFRVTRNADMVIEEEEADDFMMILEQGLKLRRKGAFVRLQIQKDADEQIVEFLNTHMKIFHKDVYEYSILLNLPSLWQIAGNKTFTHLLSPLYTPKTLPPFDENLSIFDAVEKEDILIIQPFESFDPVYKFIKEASKDPEVISIRMTLYRVEKNSNIVQALIDAASDGKQVTVMVELKARFDEENNLHWAKALENAGAHVIYGITGFKVHAKVSQVIRKQGDKLKFYMHLSTGNYNASSAKIYTDVSYFTSKAEFARDTTSFFHILSGFSKNRRLQTLSMSPNQIKEKVLEMIRIETSKKNEGVIVAKMNSLVDSDIIQALYEASMEGVQIDLIIRGICCLKPDEEYSKNIRVRSIIGKYLEHARVFYFKHSEPNYFISSADWMPRNLERRLELMTPIYDERSKAKLAQFLRLQLSDNVLAYELKNNGEYEKIPSSEKIIDSQQTLEEYVSKIYKTLKKDTDQSRATHLASKLFKEN</sequence>
<keyword id="KW-0067">ATP-binding</keyword>
<keyword id="KW-0418">Kinase</keyword>
<keyword id="KW-0460">Magnesium</keyword>
<keyword id="KW-0479">Metal-binding</keyword>
<keyword id="KW-0547">Nucleotide-binding</keyword>
<keyword id="KW-0597">Phosphoprotein</keyword>
<keyword id="KW-0808">Transferase</keyword>
<proteinExistence type="inferred from homology"/>